<name>SELO_PECAS</name>
<gene>
    <name evidence="1" type="primary">ydiU</name>
    <name evidence="1" type="synonym">selO</name>
    <name type="ordered locus">ECA1842</name>
</gene>
<dbReference type="EC" id="2.7.7.-" evidence="1"/>
<dbReference type="EC" id="2.7.7.108" evidence="1"/>
<dbReference type="EMBL" id="BX950851">
    <property type="protein sequence ID" value="CAG74745.1"/>
    <property type="molecule type" value="Genomic_DNA"/>
</dbReference>
<dbReference type="RefSeq" id="WP_011093413.1">
    <property type="nucleotide sequence ID" value="NC_004547.2"/>
</dbReference>
<dbReference type="SMR" id="Q6D646"/>
<dbReference type="KEGG" id="eca:ECA1842"/>
<dbReference type="PATRIC" id="fig|218491.5.peg.1871"/>
<dbReference type="eggNOG" id="COG0397">
    <property type="taxonomic scope" value="Bacteria"/>
</dbReference>
<dbReference type="HOGENOM" id="CLU_010245_4_0_6"/>
<dbReference type="OrthoDB" id="9776281at2"/>
<dbReference type="Proteomes" id="UP000007966">
    <property type="component" value="Chromosome"/>
</dbReference>
<dbReference type="GO" id="GO:0070733">
    <property type="term" value="F:AMPylase activity"/>
    <property type="evidence" value="ECO:0007669"/>
    <property type="project" value="RHEA"/>
</dbReference>
<dbReference type="GO" id="GO:0005524">
    <property type="term" value="F:ATP binding"/>
    <property type="evidence" value="ECO:0007669"/>
    <property type="project" value="UniProtKB-UniRule"/>
</dbReference>
<dbReference type="GO" id="GO:0000287">
    <property type="term" value="F:magnesium ion binding"/>
    <property type="evidence" value="ECO:0007669"/>
    <property type="project" value="UniProtKB-UniRule"/>
</dbReference>
<dbReference type="HAMAP" id="MF_00692">
    <property type="entry name" value="YdiU_SelO"/>
    <property type="match status" value="1"/>
</dbReference>
<dbReference type="InterPro" id="IPR003846">
    <property type="entry name" value="SelO"/>
</dbReference>
<dbReference type="NCBIfam" id="NF000658">
    <property type="entry name" value="PRK00029.1"/>
    <property type="match status" value="1"/>
</dbReference>
<dbReference type="PANTHER" id="PTHR32057">
    <property type="entry name" value="PROTEIN ADENYLYLTRANSFERASE SELO, MITOCHONDRIAL"/>
    <property type="match status" value="1"/>
</dbReference>
<dbReference type="PANTHER" id="PTHR32057:SF14">
    <property type="entry name" value="PROTEIN ADENYLYLTRANSFERASE SELO, MITOCHONDRIAL"/>
    <property type="match status" value="1"/>
</dbReference>
<dbReference type="Pfam" id="PF02696">
    <property type="entry name" value="SelO"/>
    <property type="match status" value="1"/>
</dbReference>
<sequence length="483" mass="55421">MQQTPLFKNHYFHQLPGFYTALQPTPLHGARLLYHSEGLASELGLSSDWFTPEQDDVWSGTRLLPGMEPLAQVYSGHQFGSWAGQLGDGRGILLGEQQLADGRSMDWHLKGAGLTPYSRMGDGRAVLRSAIREFLASEAMHHLGIPTTRALTIVTSQHPVQREQEEKGAMLLRVAESHVRFGHFEHFYYRREPEKVRQLVEYVIARHWPQWENDERRYELWFGDVVERTARLITHWQAVGFSHGVMNTDNMSILGLTIDYGPYGFLDAYQPDFICNHSDHRGRYAFDNQPAVGLWNLHRLGQALSGLMDTDTLERALARYEPALMQHYGTLMRAKLGLFTASPDDNDVLVGLLRLMQKEGSDYTRTFRLLADSEKQASRSPLRDEFIDRAAFDSWFATYRQRLMQEDQDDEERRRLMNATNPKYILRNYLAQMAIERAESDDTSALARLHQALCRPFDEQPDSHDLAALPPDWGKHLEISCSS</sequence>
<evidence type="ECO:0000255" key="1">
    <source>
        <dbReference type="HAMAP-Rule" id="MF_00692"/>
    </source>
</evidence>
<comment type="function">
    <text evidence="1">Nucleotidyltransferase involved in the post-translational modification of proteins. It can catalyze the addition of adenosine monophosphate (AMP) or uridine monophosphate (UMP) to a protein, resulting in modifications known as AMPylation and UMPylation.</text>
</comment>
<comment type="catalytic activity">
    <reaction evidence="1">
        <text>L-seryl-[protein] + ATP = 3-O-(5'-adenylyl)-L-seryl-[protein] + diphosphate</text>
        <dbReference type="Rhea" id="RHEA:58120"/>
        <dbReference type="Rhea" id="RHEA-COMP:9863"/>
        <dbReference type="Rhea" id="RHEA-COMP:15073"/>
        <dbReference type="ChEBI" id="CHEBI:29999"/>
        <dbReference type="ChEBI" id="CHEBI:30616"/>
        <dbReference type="ChEBI" id="CHEBI:33019"/>
        <dbReference type="ChEBI" id="CHEBI:142516"/>
        <dbReference type="EC" id="2.7.7.108"/>
    </reaction>
</comment>
<comment type="catalytic activity">
    <reaction evidence="1">
        <text>L-threonyl-[protein] + ATP = 3-O-(5'-adenylyl)-L-threonyl-[protein] + diphosphate</text>
        <dbReference type="Rhea" id="RHEA:54292"/>
        <dbReference type="Rhea" id="RHEA-COMP:11060"/>
        <dbReference type="Rhea" id="RHEA-COMP:13847"/>
        <dbReference type="ChEBI" id="CHEBI:30013"/>
        <dbReference type="ChEBI" id="CHEBI:30616"/>
        <dbReference type="ChEBI" id="CHEBI:33019"/>
        <dbReference type="ChEBI" id="CHEBI:138113"/>
        <dbReference type="EC" id="2.7.7.108"/>
    </reaction>
</comment>
<comment type="catalytic activity">
    <reaction evidence="1">
        <text>L-tyrosyl-[protein] + ATP = O-(5'-adenylyl)-L-tyrosyl-[protein] + diphosphate</text>
        <dbReference type="Rhea" id="RHEA:54288"/>
        <dbReference type="Rhea" id="RHEA-COMP:10136"/>
        <dbReference type="Rhea" id="RHEA-COMP:13846"/>
        <dbReference type="ChEBI" id="CHEBI:30616"/>
        <dbReference type="ChEBI" id="CHEBI:33019"/>
        <dbReference type="ChEBI" id="CHEBI:46858"/>
        <dbReference type="ChEBI" id="CHEBI:83624"/>
        <dbReference type="EC" id="2.7.7.108"/>
    </reaction>
</comment>
<comment type="catalytic activity">
    <reaction evidence="1">
        <text>L-histidyl-[protein] + UTP = N(tele)-(5'-uridylyl)-L-histidyl-[protein] + diphosphate</text>
        <dbReference type="Rhea" id="RHEA:83891"/>
        <dbReference type="Rhea" id="RHEA-COMP:9745"/>
        <dbReference type="Rhea" id="RHEA-COMP:20239"/>
        <dbReference type="ChEBI" id="CHEBI:29979"/>
        <dbReference type="ChEBI" id="CHEBI:33019"/>
        <dbReference type="ChEBI" id="CHEBI:46398"/>
        <dbReference type="ChEBI" id="CHEBI:233474"/>
    </reaction>
</comment>
<comment type="catalytic activity">
    <reaction evidence="1">
        <text>L-seryl-[protein] + UTP = O-(5'-uridylyl)-L-seryl-[protein] + diphosphate</text>
        <dbReference type="Rhea" id="RHEA:64604"/>
        <dbReference type="Rhea" id="RHEA-COMP:9863"/>
        <dbReference type="Rhea" id="RHEA-COMP:16635"/>
        <dbReference type="ChEBI" id="CHEBI:29999"/>
        <dbReference type="ChEBI" id="CHEBI:33019"/>
        <dbReference type="ChEBI" id="CHEBI:46398"/>
        <dbReference type="ChEBI" id="CHEBI:156051"/>
    </reaction>
</comment>
<comment type="catalytic activity">
    <reaction evidence="1">
        <text>L-tyrosyl-[protein] + UTP = O-(5'-uridylyl)-L-tyrosyl-[protein] + diphosphate</text>
        <dbReference type="Rhea" id="RHEA:83887"/>
        <dbReference type="Rhea" id="RHEA-COMP:10136"/>
        <dbReference type="Rhea" id="RHEA-COMP:20238"/>
        <dbReference type="ChEBI" id="CHEBI:33019"/>
        <dbReference type="ChEBI" id="CHEBI:46398"/>
        <dbReference type="ChEBI" id="CHEBI:46858"/>
        <dbReference type="ChEBI" id="CHEBI:90602"/>
    </reaction>
</comment>
<comment type="cofactor">
    <cofactor evidence="1">
        <name>Mg(2+)</name>
        <dbReference type="ChEBI" id="CHEBI:18420"/>
    </cofactor>
    <cofactor evidence="1">
        <name>Mn(2+)</name>
        <dbReference type="ChEBI" id="CHEBI:29035"/>
    </cofactor>
</comment>
<comment type="similarity">
    <text evidence="1">Belongs to the SELO family.</text>
</comment>
<proteinExistence type="inferred from homology"/>
<protein>
    <recommendedName>
        <fullName evidence="1">Protein nucleotidyltransferase YdiU</fullName>
        <ecNumber evidence="1">2.7.7.-</ecNumber>
    </recommendedName>
    <alternativeName>
        <fullName evidence="1">Protein adenylyltransferase YdiU</fullName>
        <ecNumber evidence="1">2.7.7.108</ecNumber>
    </alternativeName>
    <alternativeName>
        <fullName evidence="1">Protein uridylyltransferase YdiU</fullName>
        <ecNumber evidence="1">2.7.7.-</ecNumber>
    </alternativeName>
</protein>
<organism>
    <name type="scientific">Pectobacterium atrosepticum (strain SCRI 1043 / ATCC BAA-672)</name>
    <name type="common">Erwinia carotovora subsp. atroseptica</name>
    <dbReference type="NCBI Taxonomy" id="218491"/>
    <lineage>
        <taxon>Bacteria</taxon>
        <taxon>Pseudomonadati</taxon>
        <taxon>Pseudomonadota</taxon>
        <taxon>Gammaproteobacteria</taxon>
        <taxon>Enterobacterales</taxon>
        <taxon>Pectobacteriaceae</taxon>
        <taxon>Pectobacterium</taxon>
    </lineage>
</organism>
<feature type="chain" id="PRO_0000271825" description="Protein nucleotidyltransferase YdiU">
    <location>
        <begin position="1"/>
        <end position="483"/>
    </location>
</feature>
<feature type="active site" description="Proton acceptor" evidence="1">
    <location>
        <position position="249"/>
    </location>
</feature>
<feature type="binding site" evidence="1">
    <location>
        <position position="87"/>
    </location>
    <ligand>
        <name>ATP</name>
        <dbReference type="ChEBI" id="CHEBI:30616"/>
    </ligand>
</feature>
<feature type="binding site" evidence="1">
    <location>
        <position position="89"/>
    </location>
    <ligand>
        <name>ATP</name>
        <dbReference type="ChEBI" id="CHEBI:30616"/>
    </ligand>
</feature>
<feature type="binding site" evidence="1">
    <location>
        <position position="90"/>
    </location>
    <ligand>
        <name>ATP</name>
        <dbReference type="ChEBI" id="CHEBI:30616"/>
    </ligand>
</feature>
<feature type="binding site" evidence="1">
    <location>
        <position position="110"/>
    </location>
    <ligand>
        <name>ATP</name>
        <dbReference type="ChEBI" id="CHEBI:30616"/>
    </ligand>
</feature>
<feature type="binding site" evidence="1">
    <location>
        <position position="122"/>
    </location>
    <ligand>
        <name>ATP</name>
        <dbReference type="ChEBI" id="CHEBI:30616"/>
    </ligand>
</feature>
<feature type="binding site" evidence="1">
    <location>
        <position position="123"/>
    </location>
    <ligand>
        <name>ATP</name>
        <dbReference type="ChEBI" id="CHEBI:30616"/>
    </ligand>
</feature>
<feature type="binding site" evidence="1">
    <location>
        <position position="173"/>
    </location>
    <ligand>
        <name>ATP</name>
        <dbReference type="ChEBI" id="CHEBI:30616"/>
    </ligand>
</feature>
<feature type="binding site" evidence="1">
    <location>
        <position position="180"/>
    </location>
    <ligand>
        <name>ATP</name>
        <dbReference type="ChEBI" id="CHEBI:30616"/>
    </ligand>
</feature>
<feature type="binding site" evidence="1">
    <location>
        <position position="250"/>
    </location>
    <ligand>
        <name>Mg(2+)</name>
        <dbReference type="ChEBI" id="CHEBI:18420"/>
    </ligand>
</feature>
<feature type="binding site" evidence="1">
    <location>
        <position position="259"/>
    </location>
    <ligand>
        <name>ATP</name>
        <dbReference type="ChEBI" id="CHEBI:30616"/>
    </ligand>
</feature>
<feature type="binding site" evidence="1">
    <location>
        <position position="259"/>
    </location>
    <ligand>
        <name>Mg(2+)</name>
        <dbReference type="ChEBI" id="CHEBI:18420"/>
    </ligand>
</feature>
<accession>Q6D646</accession>
<keyword id="KW-0067">ATP-binding</keyword>
<keyword id="KW-0460">Magnesium</keyword>
<keyword id="KW-0464">Manganese</keyword>
<keyword id="KW-0479">Metal-binding</keyword>
<keyword id="KW-0547">Nucleotide-binding</keyword>
<keyword id="KW-0548">Nucleotidyltransferase</keyword>
<keyword id="KW-1185">Reference proteome</keyword>
<keyword id="KW-0808">Transferase</keyword>
<reference key="1">
    <citation type="journal article" date="2004" name="Proc. Natl. Acad. Sci. U.S.A.">
        <title>Genome sequence of the enterobacterial phytopathogen Erwinia carotovora subsp. atroseptica and characterization of virulence factors.</title>
        <authorList>
            <person name="Bell K.S."/>
            <person name="Sebaihia M."/>
            <person name="Pritchard L."/>
            <person name="Holden M.T.G."/>
            <person name="Hyman L.J."/>
            <person name="Holeva M.C."/>
            <person name="Thomson N.R."/>
            <person name="Bentley S.D."/>
            <person name="Churcher L.J.C."/>
            <person name="Mungall K."/>
            <person name="Atkin R."/>
            <person name="Bason N."/>
            <person name="Brooks K."/>
            <person name="Chillingworth T."/>
            <person name="Clark K."/>
            <person name="Doggett J."/>
            <person name="Fraser A."/>
            <person name="Hance Z."/>
            <person name="Hauser H."/>
            <person name="Jagels K."/>
            <person name="Moule S."/>
            <person name="Norbertczak H."/>
            <person name="Ormond D."/>
            <person name="Price C."/>
            <person name="Quail M.A."/>
            <person name="Sanders M."/>
            <person name="Walker D."/>
            <person name="Whitehead S."/>
            <person name="Salmond G.P.C."/>
            <person name="Birch P.R.J."/>
            <person name="Parkhill J."/>
            <person name="Toth I.K."/>
        </authorList>
    </citation>
    <scope>NUCLEOTIDE SEQUENCE [LARGE SCALE GENOMIC DNA]</scope>
    <source>
        <strain>SCRI 1043 / ATCC BAA-672</strain>
    </source>
</reference>